<reference key="1">
    <citation type="submission" date="2008-04" db="EMBL/GenBank/DDBJ databases">
        <title>Complete sequence of Yersinia pseudotuberculosis PB1/+.</title>
        <authorList>
            <person name="Copeland A."/>
            <person name="Lucas S."/>
            <person name="Lapidus A."/>
            <person name="Glavina del Rio T."/>
            <person name="Dalin E."/>
            <person name="Tice H."/>
            <person name="Bruce D."/>
            <person name="Goodwin L."/>
            <person name="Pitluck S."/>
            <person name="Munk A.C."/>
            <person name="Brettin T."/>
            <person name="Detter J.C."/>
            <person name="Han C."/>
            <person name="Tapia R."/>
            <person name="Schmutz J."/>
            <person name="Larimer F."/>
            <person name="Land M."/>
            <person name="Hauser L."/>
            <person name="Challacombe J.F."/>
            <person name="Green L."/>
            <person name="Lindler L.E."/>
            <person name="Nikolich M.P."/>
            <person name="Richardson P."/>
        </authorList>
    </citation>
    <scope>NUCLEOTIDE SEQUENCE [LARGE SCALE GENOMIC DNA]</scope>
    <source>
        <strain>PB1/+</strain>
    </source>
</reference>
<protein>
    <recommendedName>
        <fullName evidence="1">Der GTPase-activating protein YihI</fullName>
    </recommendedName>
</protein>
<comment type="function">
    <text evidence="1">A GTPase-activating protein (GAP) that modifies Der/EngA GTPase function. May play a role in ribosome biogenesis.</text>
</comment>
<comment type="subunit">
    <text evidence="1">Interacts with Der.</text>
</comment>
<comment type="similarity">
    <text evidence="1">Belongs to the YihI family.</text>
</comment>
<proteinExistence type="inferred from homology"/>
<accession>B2JYK6</accession>
<feature type="chain" id="PRO_1000136396" description="Der GTPase-activating protein YihI">
    <location>
        <begin position="1"/>
        <end position="188"/>
    </location>
</feature>
<feature type="region of interest" description="Disordered" evidence="2">
    <location>
        <begin position="1"/>
        <end position="80"/>
    </location>
</feature>
<feature type="region of interest" description="Disordered" evidence="2">
    <location>
        <begin position="162"/>
        <end position="188"/>
    </location>
</feature>
<feature type="compositionally biased region" description="Basic and acidic residues" evidence="2">
    <location>
        <begin position="27"/>
        <end position="37"/>
    </location>
</feature>
<feature type="compositionally biased region" description="Polar residues" evidence="2">
    <location>
        <begin position="47"/>
        <end position="57"/>
    </location>
</feature>
<dbReference type="EMBL" id="CP001048">
    <property type="protein sequence ID" value="ACC87020.1"/>
    <property type="molecule type" value="Genomic_DNA"/>
</dbReference>
<dbReference type="RefSeq" id="WP_002213158.1">
    <property type="nucleotide sequence ID" value="NZ_CP009780.1"/>
</dbReference>
<dbReference type="SMR" id="B2JYK6"/>
<dbReference type="GeneID" id="57974569"/>
<dbReference type="KEGG" id="ypb:YPTS_0021"/>
<dbReference type="PATRIC" id="fig|502801.10.peg.3697"/>
<dbReference type="GO" id="GO:0005096">
    <property type="term" value="F:GTPase activator activity"/>
    <property type="evidence" value="ECO:0007669"/>
    <property type="project" value="UniProtKB-KW"/>
</dbReference>
<dbReference type="GO" id="GO:0042254">
    <property type="term" value="P:ribosome biogenesis"/>
    <property type="evidence" value="ECO:0007669"/>
    <property type="project" value="UniProtKB-KW"/>
</dbReference>
<dbReference type="HAMAP" id="MF_01058">
    <property type="entry name" value="GAP_YihI"/>
    <property type="match status" value="1"/>
</dbReference>
<dbReference type="InterPro" id="IPR007336">
    <property type="entry name" value="YihI"/>
</dbReference>
<dbReference type="NCBIfam" id="NF003560">
    <property type="entry name" value="PRK05244.1-1"/>
    <property type="match status" value="1"/>
</dbReference>
<dbReference type="Pfam" id="PF04220">
    <property type="entry name" value="YihI"/>
    <property type="match status" value="1"/>
</dbReference>
<keyword id="KW-0343">GTPase activation</keyword>
<keyword id="KW-0690">Ribosome biogenesis</keyword>
<evidence type="ECO:0000255" key="1">
    <source>
        <dbReference type="HAMAP-Rule" id="MF_01058"/>
    </source>
</evidence>
<evidence type="ECO:0000256" key="2">
    <source>
        <dbReference type="SAM" id="MobiDB-lite"/>
    </source>
</evidence>
<gene>
    <name evidence="1" type="primary">yihI</name>
    <name type="ordered locus">YPTS_0021</name>
</gene>
<name>YIHI_YERPB</name>
<sequence length="188" mass="21348">MKQPNKAPRANIAAPKGTATPKRRRKTRDELDAEARDRKRQKKHSGNRSGARTNVEGSNKKGHSQTQEKDPRVGSKVPVPLVIESQVKAKSMPKPVEKNVVKPRLTPEEELAKLENDERLDALLDRLDNDEVLNKEDQAYVDLTLDRIDALMEQLGIELGDDEDDVEREEKQEDILQLLKRGNPKDTF</sequence>
<organism>
    <name type="scientific">Yersinia pseudotuberculosis serotype IB (strain PB1/+)</name>
    <dbReference type="NCBI Taxonomy" id="502801"/>
    <lineage>
        <taxon>Bacteria</taxon>
        <taxon>Pseudomonadati</taxon>
        <taxon>Pseudomonadota</taxon>
        <taxon>Gammaproteobacteria</taxon>
        <taxon>Enterobacterales</taxon>
        <taxon>Yersiniaceae</taxon>
        <taxon>Yersinia</taxon>
    </lineage>
</organism>